<dbReference type="EC" id="3.4.22.-"/>
<dbReference type="EMBL" id="AF194031">
    <property type="protein sequence ID" value="AAG28418.1"/>
    <property type="molecule type" value="mRNA"/>
</dbReference>
<dbReference type="EMBL" id="AY008764">
    <property type="protein sequence ID" value="AAG33253.1"/>
    <property type="molecule type" value="mRNA"/>
</dbReference>
<dbReference type="EMBL" id="AK045071">
    <property type="protein sequence ID" value="BAC32209.1"/>
    <property type="molecule type" value="mRNA"/>
</dbReference>
<dbReference type="EMBL" id="AK088608">
    <property type="protein sequence ID" value="BAC40451.1"/>
    <property type="molecule type" value="mRNA"/>
</dbReference>
<dbReference type="EMBL" id="AL603707">
    <property type="status" value="NOT_ANNOTATED_CDS"/>
    <property type="molecule type" value="Genomic_DNA"/>
</dbReference>
<dbReference type="EMBL" id="BC037014">
    <property type="protein sequence ID" value="AAH37014.1"/>
    <property type="molecule type" value="mRNA"/>
</dbReference>
<dbReference type="CCDS" id="CCDS24905.1"/>
<dbReference type="RefSeq" id="NP_001157043.1">
    <property type="nucleotide sequence ID" value="NM_001163571.1"/>
</dbReference>
<dbReference type="RefSeq" id="NP_109627.3">
    <property type="nucleotide sequence ID" value="NM_030702.4"/>
</dbReference>
<dbReference type="SMR" id="Q9EP97"/>
<dbReference type="BioGRID" id="219830">
    <property type="interactions" value="17"/>
</dbReference>
<dbReference type="DIP" id="DIP-59204N"/>
<dbReference type="FunCoup" id="Q9EP97">
    <property type="interactions" value="3885"/>
</dbReference>
<dbReference type="IntAct" id="Q9EP97">
    <property type="interactions" value="2"/>
</dbReference>
<dbReference type="STRING" id="10090.ENSMUSP00000005336"/>
<dbReference type="MEROPS" id="C48.003"/>
<dbReference type="GlyGen" id="Q9EP97">
    <property type="glycosylation" value="1 site, 1 O-linked glycan (1 site)"/>
</dbReference>
<dbReference type="iPTMnet" id="Q9EP97"/>
<dbReference type="PhosphoSitePlus" id="Q9EP97"/>
<dbReference type="SwissPalm" id="Q9EP97"/>
<dbReference type="jPOST" id="Q9EP97"/>
<dbReference type="PaxDb" id="10090-ENSMUSP00000005336"/>
<dbReference type="PeptideAtlas" id="Q9EP97"/>
<dbReference type="ProteomicsDB" id="256960"/>
<dbReference type="Pumba" id="Q9EP97"/>
<dbReference type="DNASU" id="80886"/>
<dbReference type="Ensembl" id="ENSMUST00000005336.9">
    <property type="protein sequence ID" value="ENSMUSP00000005336.3"/>
    <property type="gene ID" value="ENSMUSG00000005204.13"/>
</dbReference>
<dbReference type="Ensembl" id="ENSMUST00000066760.8">
    <property type="protein sequence ID" value="ENSMUSP00000066581.2"/>
    <property type="gene ID" value="ENSMUSG00000005204.13"/>
</dbReference>
<dbReference type="GeneID" id="80886"/>
<dbReference type="KEGG" id="mmu:80886"/>
<dbReference type="UCSC" id="uc007jrb.2">
    <property type="organism name" value="mouse"/>
</dbReference>
<dbReference type="AGR" id="MGI:2158736"/>
<dbReference type="CTD" id="26168"/>
<dbReference type="MGI" id="MGI:2158736">
    <property type="gene designation" value="Senp3"/>
</dbReference>
<dbReference type="VEuPathDB" id="HostDB:ENSMUSG00000005204"/>
<dbReference type="eggNOG" id="KOG0778">
    <property type="taxonomic scope" value="Eukaryota"/>
</dbReference>
<dbReference type="GeneTree" id="ENSGT00940000156309"/>
<dbReference type="HOGENOM" id="CLU_035238_0_0_1"/>
<dbReference type="InParanoid" id="Q9EP97"/>
<dbReference type="OMA" id="CRASREW"/>
<dbReference type="OrthoDB" id="1939479at2759"/>
<dbReference type="PhylomeDB" id="Q9EP97"/>
<dbReference type="TreeFam" id="TF316289"/>
<dbReference type="BRENDA" id="3.4.22.B72">
    <property type="organism ID" value="3474"/>
</dbReference>
<dbReference type="Reactome" id="R-MMU-6791226">
    <property type="pathway name" value="Major pathway of rRNA processing in the nucleolus and cytosol"/>
</dbReference>
<dbReference type="BioGRID-ORCS" id="80886">
    <property type="hits" value="8 hits in 79 CRISPR screens"/>
</dbReference>
<dbReference type="ChiTaRS" id="Senp3">
    <property type="organism name" value="mouse"/>
</dbReference>
<dbReference type="PRO" id="PR:Q9EP97"/>
<dbReference type="Proteomes" id="UP000000589">
    <property type="component" value="Chromosome 11"/>
</dbReference>
<dbReference type="RNAct" id="Q9EP97">
    <property type="molecule type" value="protein"/>
</dbReference>
<dbReference type="Bgee" id="ENSMUSG00000005204">
    <property type="expression patterns" value="Expressed in retinal neural layer and 268 other cell types or tissues"/>
</dbReference>
<dbReference type="ExpressionAtlas" id="Q9EP97">
    <property type="expression patterns" value="baseline and differential"/>
</dbReference>
<dbReference type="GO" id="GO:0005737">
    <property type="term" value="C:cytoplasm"/>
    <property type="evidence" value="ECO:0007669"/>
    <property type="project" value="UniProtKB-SubCell"/>
</dbReference>
<dbReference type="GO" id="GO:0071339">
    <property type="term" value="C:MLL1 complex"/>
    <property type="evidence" value="ECO:0000250"/>
    <property type="project" value="UniProtKB"/>
</dbReference>
<dbReference type="GO" id="GO:0016604">
    <property type="term" value="C:nuclear body"/>
    <property type="evidence" value="ECO:0007669"/>
    <property type="project" value="Ensembl"/>
</dbReference>
<dbReference type="GO" id="GO:0005730">
    <property type="term" value="C:nucleolus"/>
    <property type="evidence" value="ECO:0000314"/>
    <property type="project" value="MGI"/>
</dbReference>
<dbReference type="GO" id="GO:0004843">
    <property type="term" value="F:cysteine-type deubiquitinase activity"/>
    <property type="evidence" value="ECO:0000314"/>
    <property type="project" value="MGI"/>
</dbReference>
<dbReference type="GO" id="GO:0016929">
    <property type="term" value="F:deSUMOylase activity"/>
    <property type="evidence" value="ECO:0000250"/>
    <property type="project" value="UniProtKB"/>
</dbReference>
<dbReference type="GO" id="GO:2000042">
    <property type="term" value="P:negative regulation of double-strand break repair via homologous recombination"/>
    <property type="evidence" value="ECO:0007669"/>
    <property type="project" value="Ensembl"/>
</dbReference>
<dbReference type="GO" id="GO:0016926">
    <property type="term" value="P:protein desumoylation"/>
    <property type="evidence" value="ECO:0000250"/>
    <property type="project" value="UniProtKB"/>
</dbReference>
<dbReference type="GO" id="GO:0006508">
    <property type="term" value="P:proteolysis"/>
    <property type="evidence" value="ECO:0007669"/>
    <property type="project" value="UniProtKB-KW"/>
</dbReference>
<dbReference type="FunFam" id="3.40.395.10:FF:000002">
    <property type="entry name" value="Putative sentrin-specific protease 5"/>
    <property type="match status" value="1"/>
</dbReference>
<dbReference type="Gene3D" id="3.40.395.10">
    <property type="entry name" value="Adenoviral Proteinase, Chain A"/>
    <property type="match status" value="1"/>
</dbReference>
<dbReference type="InterPro" id="IPR038765">
    <property type="entry name" value="Papain-like_cys_pep_sf"/>
</dbReference>
<dbReference type="InterPro" id="IPR003653">
    <property type="entry name" value="Peptidase_C48_C"/>
</dbReference>
<dbReference type="InterPro" id="IPR045577">
    <property type="entry name" value="SENP3_5_cons_dom"/>
</dbReference>
<dbReference type="PANTHER" id="PTHR12606:SF16">
    <property type="entry name" value="SENTRIN-SPECIFIC PROTEASE 3"/>
    <property type="match status" value="1"/>
</dbReference>
<dbReference type="PANTHER" id="PTHR12606">
    <property type="entry name" value="SENTRIN/SUMO-SPECIFIC PROTEASE"/>
    <property type="match status" value="1"/>
</dbReference>
<dbReference type="Pfam" id="PF02902">
    <property type="entry name" value="Peptidase_C48"/>
    <property type="match status" value="1"/>
</dbReference>
<dbReference type="Pfam" id="PF19722">
    <property type="entry name" value="SENP3_5_N"/>
    <property type="match status" value="1"/>
</dbReference>
<dbReference type="SUPFAM" id="SSF54001">
    <property type="entry name" value="Cysteine proteinases"/>
    <property type="match status" value="1"/>
</dbReference>
<dbReference type="PROSITE" id="PS50600">
    <property type="entry name" value="ULP_PROTEASE"/>
    <property type="match status" value="1"/>
</dbReference>
<name>SENP3_MOUSE</name>
<sequence>MKETIQGTGSWGPEPPGPGTTYSNPRRERLRWPLPPKPRLKSGGGFGPDPGSGTTVPTRRLPAPRPSFDASASEEEEEEEEEDEEEVAAWRLPPRWGQLGASQRSRALRPSHRKTCSQRRRRAMRAFQMLLYSKSTSLTFHWKLWGRHRGRRRNLAHPKNHLSPQEGGATPQVPSPCCRFDSPRGLPPPRLGLLGALMAEDGMRGSPPVPSGPPMEEDGLRWTPKSPLDPDSGLLSCTLPNGFGGLSGPEGERSLAPPDASILISNVCSIGDHVAQELFQSSDLGIAEEADRTGEKAGQHSPLREEHVTCVQSILDEFLQTYGSLIPLSTDEVVEKLEDIFQQEFSTPSRKSLVLQLIQSYQRMPGNAMVRGFRVSYKRHVLTMDDLGTLYGQNWLNDQVMNMYGDLVMDTVPEKVHFFNSFFYDKLRTKGYDGVKRWTKNVDIFNKELLLIPIHLEVHWSLISVDVRRRTITYFDSQRTLNRRCPKHIAKYLQAEAVKKDRLDFHQGWKGYFKMNVARQNNDSDCGAFVLQYCKHLALSQPFSFTQQDMPKLRRQIYKELCHCKLTV</sequence>
<protein>
    <recommendedName>
        <fullName>Sentrin-specific protease 3</fullName>
        <ecNumber>3.4.22.-</ecNumber>
    </recommendedName>
    <alternativeName>
        <fullName>SUMO-1-specific protease 3</fullName>
    </alternativeName>
    <alternativeName>
        <fullName>Sentrin/SUMO-specific protease SENP3</fullName>
    </alternativeName>
    <alternativeName>
        <fullName evidence="7">Smt3-specific isopeptidase 1</fullName>
        <shortName evidence="7">Smt3ip1</shortName>
    </alternativeName>
</protein>
<gene>
    <name type="primary">Senp3</name>
    <name type="synonym">Smt3ip</name>
    <name evidence="7" type="synonym">Smt3ip1</name>
</gene>
<proteinExistence type="evidence at protein level"/>
<reference key="1">
    <citation type="journal article" date="2000" name="Eur. J. Biochem.">
        <title>A novel mammalian Smt3-specific isopeptidase 1 (SMT3IP1) localized in the nucleolus at interphase.</title>
        <authorList>
            <person name="Nishida T."/>
            <person name="Tanaka H."/>
            <person name="Yasuda H."/>
        </authorList>
    </citation>
    <scope>NUCLEOTIDE SEQUENCE [MRNA]</scope>
    <scope>SUBCELLULAR LOCATION</scope>
    <scope>FUNCTION</scope>
    <source>
        <tissue>T-cell lymphoma</tissue>
    </source>
</reference>
<reference key="2">
    <citation type="journal article" date="2000" name="Gene">
        <title>Ubiquitin-like proteins: new wines in new bottles.</title>
        <authorList>
            <person name="Yeh E.T.H."/>
            <person name="Gong L."/>
            <person name="Kamitani T."/>
        </authorList>
    </citation>
    <scope>NUCLEOTIDE SEQUENCE [MRNA]</scope>
    <source>
        <strain>C57BL/6J</strain>
    </source>
</reference>
<reference key="3">
    <citation type="journal article" date="2005" name="Science">
        <title>The transcriptional landscape of the mammalian genome.</title>
        <authorList>
            <person name="Carninci P."/>
            <person name="Kasukawa T."/>
            <person name="Katayama S."/>
            <person name="Gough J."/>
            <person name="Frith M.C."/>
            <person name="Maeda N."/>
            <person name="Oyama R."/>
            <person name="Ravasi T."/>
            <person name="Lenhard B."/>
            <person name="Wells C."/>
            <person name="Kodzius R."/>
            <person name="Shimokawa K."/>
            <person name="Bajic V.B."/>
            <person name="Brenner S.E."/>
            <person name="Batalov S."/>
            <person name="Forrest A.R."/>
            <person name="Zavolan M."/>
            <person name="Davis M.J."/>
            <person name="Wilming L.G."/>
            <person name="Aidinis V."/>
            <person name="Allen J.E."/>
            <person name="Ambesi-Impiombato A."/>
            <person name="Apweiler R."/>
            <person name="Aturaliya R.N."/>
            <person name="Bailey T.L."/>
            <person name="Bansal M."/>
            <person name="Baxter L."/>
            <person name="Beisel K.W."/>
            <person name="Bersano T."/>
            <person name="Bono H."/>
            <person name="Chalk A.M."/>
            <person name="Chiu K.P."/>
            <person name="Choudhary V."/>
            <person name="Christoffels A."/>
            <person name="Clutterbuck D.R."/>
            <person name="Crowe M.L."/>
            <person name="Dalla E."/>
            <person name="Dalrymple B.P."/>
            <person name="de Bono B."/>
            <person name="Della Gatta G."/>
            <person name="di Bernardo D."/>
            <person name="Down T."/>
            <person name="Engstrom P."/>
            <person name="Fagiolini M."/>
            <person name="Faulkner G."/>
            <person name="Fletcher C.F."/>
            <person name="Fukushima T."/>
            <person name="Furuno M."/>
            <person name="Futaki S."/>
            <person name="Gariboldi M."/>
            <person name="Georgii-Hemming P."/>
            <person name="Gingeras T.R."/>
            <person name="Gojobori T."/>
            <person name="Green R.E."/>
            <person name="Gustincich S."/>
            <person name="Harbers M."/>
            <person name="Hayashi Y."/>
            <person name="Hensch T.K."/>
            <person name="Hirokawa N."/>
            <person name="Hill D."/>
            <person name="Huminiecki L."/>
            <person name="Iacono M."/>
            <person name="Ikeo K."/>
            <person name="Iwama A."/>
            <person name="Ishikawa T."/>
            <person name="Jakt M."/>
            <person name="Kanapin A."/>
            <person name="Katoh M."/>
            <person name="Kawasawa Y."/>
            <person name="Kelso J."/>
            <person name="Kitamura H."/>
            <person name="Kitano H."/>
            <person name="Kollias G."/>
            <person name="Krishnan S.P."/>
            <person name="Kruger A."/>
            <person name="Kummerfeld S.K."/>
            <person name="Kurochkin I.V."/>
            <person name="Lareau L.F."/>
            <person name="Lazarevic D."/>
            <person name="Lipovich L."/>
            <person name="Liu J."/>
            <person name="Liuni S."/>
            <person name="McWilliam S."/>
            <person name="Madan Babu M."/>
            <person name="Madera M."/>
            <person name="Marchionni L."/>
            <person name="Matsuda H."/>
            <person name="Matsuzawa S."/>
            <person name="Miki H."/>
            <person name="Mignone F."/>
            <person name="Miyake S."/>
            <person name="Morris K."/>
            <person name="Mottagui-Tabar S."/>
            <person name="Mulder N."/>
            <person name="Nakano N."/>
            <person name="Nakauchi H."/>
            <person name="Ng P."/>
            <person name="Nilsson R."/>
            <person name="Nishiguchi S."/>
            <person name="Nishikawa S."/>
            <person name="Nori F."/>
            <person name="Ohara O."/>
            <person name="Okazaki Y."/>
            <person name="Orlando V."/>
            <person name="Pang K.C."/>
            <person name="Pavan W.J."/>
            <person name="Pavesi G."/>
            <person name="Pesole G."/>
            <person name="Petrovsky N."/>
            <person name="Piazza S."/>
            <person name="Reed J."/>
            <person name="Reid J.F."/>
            <person name="Ring B.Z."/>
            <person name="Ringwald M."/>
            <person name="Rost B."/>
            <person name="Ruan Y."/>
            <person name="Salzberg S.L."/>
            <person name="Sandelin A."/>
            <person name="Schneider C."/>
            <person name="Schoenbach C."/>
            <person name="Sekiguchi K."/>
            <person name="Semple C.A."/>
            <person name="Seno S."/>
            <person name="Sessa L."/>
            <person name="Sheng Y."/>
            <person name="Shibata Y."/>
            <person name="Shimada H."/>
            <person name="Shimada K."/>
            <person name="Silva D."/>
            <person name="Sinclair B."/>
            <person name="Sperling S."/>
            <person name="Stupka E."/>
            <person name="Sugiura K."/>
            <person name="Sultana R."/>
            <person name="Takenaka Y."/>
            <person name="Taki K."/>
            <person name="Tammoja K."/>
            <person name="Tan S.L."/>
            <person name="Tang S."/>
            <person name="Taylor M.S."/>
            <person name="Tegner J."/>
            <person name="Teichmann S.A."/>
            <person name="Ueda H.R."/>
            <person name="van Nimwegen E."/>
            <person name="Verardo R."/>
            <person name="Wei C.L."/>
            <person name="Yagi K."/>
            <person name="Yamanishi H."/>
            <person name="Zabarovsky E."/>
            <person name="Zhu S."/>
            <person name="Zimmer A."/>
            <person name="Hide W."/>
            <person name="Bult C."/>
            <person name="Grimmond S.M."/>
            <person name="Teasdale R.D."/>
            <person name="Liu E.T."/>
            <person name="Brusic V."/>
            <person name="Quackenbush J."/>
            <person name="Wahlestedt C."/>
            <person name="Mattick J.S."/>
            <person name="Hume D.A."/>
            <person name="Kai C."/>
            <person name="Sasaki D."/>
            <person name="Tomaru Y."/>
            <person name="Fukuda S."/>
            <person name="Kanamori-Katayama M."/>
            <person name="Suzuki M."/>
            <person name="Aoki J."/>
            <person name="Arakawa T."/>
            <person name="Iida J."/>
            <person name="Imamura K."/>
            <person name="Itoh M."/>
            <person name="Kato T."/>
            <person name="Kawaji H."/>
            <person name="Kawagashira N."/>
            <person name="Kawashima T."/>
            <person name="Kojima M."/>
            <person name="Kondo S."/>
            <person name="Konno H."/>
            <person name="Nakano K."/>
            <person name="Ninomiya N."/>
            <person name="Nishio T."/>
            <person name="Okada M."/>
            <person name="Plessy C."/>
            <person name="Shibata K."/>
            <person name="Shiraki T."/>
            <person name="Suzuki S."/>
            <person name="Tagami M."/>
            <person name="Waki K."/>
            <person name="Watahiki A."/>
            <person name="Okamura-Oho Y."/>
            <person name="Suzuki H."/>
            <person name="Kawai J."/>
            <person name="Hayashizaki Y."/>
        </authorList>
    </citation>
    <scope>NUCLEOTIDE SEQUENCE [LARGE SCALE MRNA]</scope>
    <source>
        <strain>NOD</strain>
        <tissue>Embryo</tissue>
        <tissue>Thymus</tissue>
    </source>
</reference>
<reference key="4">
    <citation type="journal article" date="2009" name="PLoS Biol.">
        <title>Lineage-specific biology revealed by a finished genome assembly of the mouse.</title>
        <authorList>
            <person name="Church D.M."/>
            <person name="Goodstadt L."/>
            <person name="Hillier L.W."/>
            <person name="Zody M.C."/>
            <person name="Goldstein S."/>
            <person name="She X."/>
            <person name="Bult C.J."/>
            <person name="Agarwala R."/>
            <person name="Cherry J.L."/>
            <person name="DiCuccio M."/>
            <person name="Hlavina W."/>
            <person name="Kapustin Y."/>
            <person name="Meric P."/>
            <person name="Maglott D."/>
            <person name="Birtle Z."/>
            <person name="Marques A.C."/>
            <person name="Graves T."/>
            <person name="Zhou S."/>
            <person name="Teague B."/>
            <person name="Potamousis K."/>
            <person name="Churas C."/>
            <person name="Place M."/>
            <person name="Herschleb J."/>
            <person name="Runnheim R."/>
            <person name="Forrest D."/>
            <person name="Amos-Landgraf J."/>
            <person name="Schwartz D.C."/>
            <person name="Cheng Z."/>
            <person name="Lindblad-Toh K."/>
            <person name="Eichler E.E."/>
            <person name="Ponting C.P."/>
        </authorList>
    </citation>
    <scope>NUCLEOTIDE SEQUENCE [LARGE SCALE GENOMIC DNA]</scope>
    <source>
        <strain>C57BL/6J</strain>
    </source>
</reference>
<reference key="5">
    <citation type="journal article" date="2004" name="Genome Res.">
        <title>The status, quality, and expansion of the NIH full-length cDNA project: the Mammalian Gene Collection (MGC).</title>
        <authorList>
            <consortium name="The MGC Project Team"/>
        </authorList>
    </citation>
    <scope>NUCLEOTIDE SEQUENCE [LARGE SCALE MRNA]</scope>
    <source>
        <tissue>Mammary tumor</tissue>
    </source>
</reference>
<reference key="6">
    <citation type="journal article" date="2007" name="Proc. Natl. Acad. Sci. U.S.A.">
        <title>Large-scale phosphorylation analysis of mouse liver.</title>
        <authorList>
            <person name="Villen J."/>
            <person name="Beausoleil S.A."/>
            <person name="Gerber S.A."/>
            <person name="Gygi S.P."/>
        </authorList>
    </citation>
    <scope>PHOSPHORYLATION [LARGE SCALE ANALYSIS] AT SER-175</scope>
    <scope>IDENTIFICATION BY MASS SPECTROMETRY [LARGE SCALE ANALYSIS]</scope>
    <source>
        <tissue>Liver</tissue>
    </source>
</reference>
<reference key="7">
    <citation type="journal article" date="2010" name="Cell">
        <title>A tissue-specific atlas of mouse protein phosphorylation and expression.</title>
        <authorList>
            <person name="Huttlin E.L."/>
            <person name="Jedrychowski M.P."/>
            <person name="Elias J.E."/>
            <person name="Goswami T."/>
            <person name="Rad R."/>
            <person name="Beausoleil S.A."/>
            <person name="Villen J."/>
            <person name="Haas W."/>
            <person name="Sowa M.E."/>
            <person name="Gygi S.P."/>
        </authorList>
    </citation>
    <scope>PHOSPHORYLATION [LARGE SCALE ANALYSIS] AT SER-71; SER-73; SER-163; THR-170; SER-175; SER-182; SER-206 AND SER-226</scope>
    <scope>IDENTIFICATION BY MASS SPECTROMETRY [LARGE SCALE ANALYSIS]</scope>
    <source>
        <tissue>Brain</tissue>
        <tissue>Brown adipose tissue</tissue>
        <tissue>Kidney</tissue>
        <tissue>Liver</tissue>
        <tissue>Lung</tissue>
        <tissue>Pancreas</tissue>
        <tissue>Spleen</tissue>
        <tissue>Testis</tissue>
    </source>
</reference>
<reference key="8">
    <citation type="journal article" date="2012" name="Mol. Cell. Proteomics">
        <title>Five friends of methylated chromatin target of protein-arginine-methyltransferase[prmt]-1 (chtop), a complex linking arginine methylation to desumoylation.</title>
        <authorList>
            <person name="Fanis P."/>
            <person name="Gillemans N."/>
            <person name="Aghajanirefah A."/>
            <person name="Pourfarzad F."/>
            <person name="Demmers J."/>
            <person name="Esteghamat F."/>
            <person name="Vadlamudi R.K."/>
            <person name="Grosveld F."/>
            <person name="Philipsen S."/>
            <person name="van Dijk T.B."/>
        </authorList>
    </citation>
    <scope>FUNCTION</scope>
    <scope>IDENTIFICATION IN THE 5FMC COMPLEX</scope>
    <scope>INTERACTION OF THE 5FMC COMPLEX WITH CHTOP AND ZNF148</scope>
    <scope>INTERACTION WITH NOL9</scope>
    <scope>SUBCELLULAR LOCATION</scope>
</reference>
<keyword id="KW-0963">Cytoplasm</keyword>
<keyword id="KW-0378">Hydrolase</keyword>
<keyword id="KW-0539">Nucleus</keyword>
<keyword id="KW-0597">Phosphoprotein</keyword>
<keyword id="KW-0645">Protease</keyword>
<keyword id="KW-1185">Reference proteome</keyword>
<keyword id="KW-0788">Thiol protease</keyword>
<keyword id="KW-0833">Ubl conjugation pathway</keyword>
<evidence type="ECO:0000250" key="1">
    <source>
        <dbReference type="UniProtKB" id="Q9H4L4"/>
    </source>
</evidence>
<evidence type="ECO:0000250" key="2">
    <source>
        <dbReference type="UniProtKB" id="Q9HC62"/>
    </source>
</evidence>
<evidence type="ECO:0000255" key="3"/>
<evidence type="ECO:0000256" key="4">
    <source>
        <dbReference type="SAM" id="MobiDB-lite"/>
    </source>
</evidence>
<evidence type="ECO:0000269" key="5">
    <source>
    </source>
</evidence>
<evidence type="ECO:0000269" key="6">
    <source>
    </source>
</evidence>
<evidence type="ECO:0000303" key="7">
    <source>
    </source>
</evidence>
<evidence type="ECO:0000305" key="8"/>
<evidence type="ECO:0007744" key="9">
    <source>
    </source>
</evidence>
<evidence type="ECO:0007744" key="10">
    <source>
    </source>
</evidence>
<comment type="function">
    <text evidence="1 5 6">Protease that releases SUMO2 and SUMO3 monomers from sumoylated substrates, but has only weak activity against SUMO1 conjugates (PubMed:11029585). Deconjugates SUMO2 from MEF2D, which increases its transcriptional activation capability (By similarity). Deconjugates SUMO2 and SUMO3 from CDCA8 (By similarity). Redox sensor that, when redistributed into nucleoplasm, can act as an effector to enhance HIF1A transcriptional activity by desumoylating EP300 (By similarity). Required for rRNA processing through deconjugation of SUMO2 and SUMO3 from nucleophosmin, NPM1 (By similarity). Plays a role in the regulation of sumoylation status of ZNF148 (By similarity). Functions as a component of the Five Friends of Methylated CHTOP (5FMC) complex; the 5FMC complex is recruited to ZNF148 by methylated CHTOP, leading to desumoylation of ZNF148 and subsequent transactivation of ZNF148 target genes (PubMed:22872859). Deconjugates SUMO2 from KAT5 (By similarity). Catalyzes desumoylation of MRE11 (By similarity).</text>
</comment>
<comment type="activity regulation">
    <text evidence="1">On oxidative stress, SENP3 degradation is blocked by inhibition of its ubiquitination, which stabilizes it as it accumulates in the nucleoplasm.</text>
</comment>
<comment type="subunit">
    <text evidence="1 6">Component of some MLL1/MLL complex, at least composed of the core components KMT2A/MLL1, ASH2L, HCFC1/HCF1, WDR5 and RBBP5, as well as the facultative components BACC1, CHD8, E2F6, HSP70, INO80C, KANSL1, LAS1L, MAX, MCRS1, MGA, MYST1/MOF, PELP1, PHF20, PRP31, RING2, RUVB1/TIP49A, RUVB2/TIP49B, SENP3, TAF1, TAF4, TAF6, TAF7, TAF9 and TEX10 (By similarity). Interacts with EP300, NPM1 and CDCA8 (By similarity). Component of the 5FMC complex, at least composed of PELP1, LAS1L, TEX10, WDR18 and SENP3; the complex interacts with methylated CHTOP and ZNF148 (PubMed:22872859). Interacts with NOL9 (PubMed:22872859). Interacts with CCAR2 (By similarity).</text>
</comment>
<comment type="subcellular location">
    <subcellularLocation>
        <location evidence="5">Nucleus</location>
        <location evidence="5">Nucleolus</location>
    </subcellularLocation>
    <subcellularLocation>
        <location evidence="6">Nucleus</location>
        <location evidence="6">Nucleoplasm</location>
    </subcellularLocation>
    <subcellularLocation>
        <location evidence="6">Cytoplasm</location>
    </subcellularLocation>
    <text evidence="1 6">Redistributes between the nucleolus and the nucleoplasm in response to mild oxidative stress (By similarity). Mainly found in the nucleoplasm, with low levels detected in the cytoplasmic and chromatin fractions (PubMed:22872859).</text>
</comment>
<comment type="similarity">
    <text evidence="8">Belongs to the peptidase C48 family.</text>
</comment>
<organism>
    <name type="scientific">Mus musculus</name>
    <name type="common">Mouse</name>
    <dbReference type="NCBI Taxonomy" id="10090"/>
    <lineage>
        <taxon>Eukaryota</taxon>
        <taxon>Metazoa</taxon>
        <taxon>Chordata</taxon>
        <taxon>Craniata</taxon>
        <taxon>Vertebrata</taxon>
        <taxon>Euteleostomi</taxon>
        <taxon>Mammalia</taxon>
        <taxon>Eutheria</taxon>
        <taxon>Euarchontoglires</taxon>
        <taxon>Glires</taxon>
        <taxon>Rodentia</taxon>
        <taxon>Myomorpha</taxon>
        <taxon>Muroidea</taxon>
        <taxon>Muridae</taxon>
        <taxon>Murinae</taxon>
        <taxon>Mus</taxon>
        <taxon>Mus</taxon>
    </lineage>
</organism>
<accession>Q9EP97</accession>
<accession>Q5F2A5</accession>
<accession>Q8BRD5</accession>
<accession>Q8C2H5</accession>
<feature type="chain" id="PRO_0000101722" description="Sentrin-specific protease 3">
    <location>
        <begin position="1"/>
        <end position="568"/>
    </location>
</feature>
<feature type="region of interest" description="Disordered" evidence="4">
    <location>
        <begin position="1"/>
        <end position="119"/>
    </location>
</feature>
<feature type="region of interest" description="Disordered" evidence="4">
    <location>
        <begin position="155"/>
        <end position="174"/>
    </location>
</feature>
<feature type="region of interest" description="Protease">
    <location>
        <begin position="380"/>
        <end position="537"/>
    </location>
</feature>
<feature type="short sequence motif" description="Nuclear localization signal" evidence="3">
    <location>
        <begin position="119"/>
        <end position="122"/>
    </location>
</feature>
<feature type="short sequence motif" description="Nuclear localization signal" evidence="3">
    <location>
        <begin position="147"/>
        <end position="153"/>
    </location>
</feature>
<feature type="compositionally biased region" description="Acidic residues" evidence="4">
    <location>
        <begin position="72"/>
        <end position="87"/>
    </location>
</feature>
<feature type="compositionally biased region" description="Basic residues" evidence="4">
    <location>
        <begin position="106"/>
        <end position="119"/>
    </location>
</feature>
<feature type="active site" evidence="2">
    <location>
        <position position="459"/>
    </location>
</feature>
<feature type="active site" evidence="2">
    <location>
        <position position="476"/>
    </location>
</feature>
<feature type="active site" description="Nucleophile" evidence="2">
    <location>
        <position position="526"/>
    </location>
</feature>
<feature type="modified residue" description="Phosphoserine" evidence="1">
    <location>
        <position position="52"/>
    </location>
</feature>
<feature type="modified residue" description="Phosphoserine" evidence="10">
    <location>
        <position position="71"/>
    </location>
</feature>
<feature type="modified residue" description="Phosphoserine" evidence="10">
    <location>
        <position position="73"/>
    </location>
</feature>
<feature type="modified residue" description="Phosphoserine" evidence="10">
    <location>
        <position position="163"/>
    </location>
</feature>
<feature type="modified residue" description="Phosphothreonine" evidence="10">
    <location>
        <position position="170"/>
    </location>
</feature>
<feature type="modified residue" description="Phosphoserine" evidence="9 10">
    <location>
        <position position="175"/>
    </location>
</feature>
<feature type="modified residue" description="Phosphoserine" evidence="10">
    <location>
        <position position="182"/>
    </location>
</feature>
<feature type="modified residue" description="Phosphoserine" evidence="10">
    <location>
        <position position="206"/>
    </location>
</feature>
<feature type="modified residue" description="Phosphoserine" evidence="10">
    <location>
        <position position="226"/>
    </location>
</feature>
<feature type="sequence conflict" description="In Ref. 3; BAC32209." evidence="8" ref="3">
    <original>D</original>
    <variation>G</variation>
    <location>
        <position position="229"/>
    </location>
</feature>
<feature type="sequence conflict" description="In Ref. 3; BAC40451." evidence="8" ref="3">
    <original>K</original>
    <variation>E</variation>
    <location>
        <position position="440"/>
    </location>
</feature>